<sequence>MSANYIEVQIFGQVLRFHCPPDQQENLLASAQRLEERVALLKDQSGIIQLEKVLTIVALNLNYELEQEKQKNANNKAVLESCIHQLDNSLSKLLSGSSVAINQESV</sequence>
<dbReference type="EMBL" id="CP000687">
    <property type="protein sequence ID" value="ABY68715.1"/>
    <property type="molecule type" value="Genomic_DNA"/>
</dbReference>
<dbReference type="RefSeq" id="WP_012262701.1">
    <property type="nucleotide sequence ID" value="NC_010278.1"/>
</dbReference>
<dbReference type="SMR" id="B0BS15"/>
<dbReference type="KEGG" id="apj:APJL_0111"/>
<dbReference type="HOGENOM" id="CLU_116623_3_0_6"/>
<dbReference type="Proteomes" id="UP000008547">
    <property type="component" value="Chromosome"/>
</dbReference>
<dbReference type="GO" id="GO:0032153">
    <property type="term" value="C:cell division site"/>
    <property type="evidence" value="ECO:0007669"/>
    <property type="project" value="TreeGrafter"/>
</dbReference>
<dbReference type="GO" id="GO:0030428">
    <property type="term" value="C:cell septum"/>
    <property type="evidence" value="ECO:0007669"/>
    <property type="project" value="TreeGrafter"/>
</dbReference>
<dbReference type="GO" id="GO:0005829">
    <property type="term" value="C:cytosol"/>
    <property type="evidence" value="ECO:0007669"/>
    <property type="project" value="TreeGrafter"/>
</dbReference>
<dbReference type="GO" id="GO:0000917">
    <property type="term" value="P:division septum assembly"/>
    <property type="evidence" value="ECO:0007669"/>
    <property type="project" value="UniProtKB-KW"/>
</dbReference>
<dbReference type="GO" id="GO:0043093">
    <property type="term" value="P:FtsZ-dependent cytokinesis"/>
    <property type="evidence" value="ECO:0007669"/>
    <property type="project" value="TreeGrafter"/>
</dbReference>
<dbReference type="GO" id="GO:0000921">
    <property type="term" value="P:septin ring assembly"/>
    <property type="evidence" value="ECO:0007669"/>
    <property type="project" value="TreeGrafter"/>
</dbReference>
<dbReference type="Gene3D" id="3.30.160.880">
    <property type="entry name" value="Cell division protein ZapA protomer, N-terminal domain"/>
    <property type="match status" value="1"/>
</dbReference>
<dbReference type="InterPro" id="IPR007838">
    <property type="entry name" value="Cell_div_ZapA-like"/>
</dbReference>
<dbReference type="InterPro" id="IPR036192">
    <property type="entry name" value="Cell_div_ZapA-like_sf"/>
</dbReference>
<dbReference type="InterPro" id="IPR042233">
    <property type="entry name" value="Cell_div_ZapA_N"/>
</dbReference>
<dbReference type="PANTHER" id="PTHR34981">
    <property type="entry name" value="CELL DIVISION PROTEIN ZAPA"/>
    <property type="match status" value="1"/>
</dbReference>
<dbReference type="PANTHER" id="PTHR34981:SF1">
    <property type="entry name" value="CELL DIVISION PROTEIN ZAPA"/>
    <property type="match status" value="1"/>
</dbReference>
<dbReference type="Pfam" id="PF05164">
    <property type="entry name" value="ZapA"/>
    <property type="match status" value="1"/>
</dbReference>
<dbReference type="SUPFAM" id="SSF102829">
    <property type="entry name" value="Cell division protein ZapA-like"/>
    <property type="match status" value="1"/>
</dbReference>
<feature type="chain" id="PRO_0000346119" description="Cell division protein ZapA">
    <location>
        <begin position="1"/>
        <end position="106"/>
    </location>
</feature>
<feature type="coiled-coil region" evidence="2">
    <location>
        <begin position="22"/>
        <end position="81"/>
    </location>
</feature>
<gene>
    <name type="primary">zapA</name>
    <name type="ordered locus">APJL_0111</name>
</gene>
<keyword id="KW-0131">Cell cycle</keyword>
<keyword id="KW-0132">Cell division</keyword>
<keyword id="KW-0175">Coiled coil</keyword>
<keyword id="KW-0963">Cytoplasm</keyword>
<keyword id="KW-0717">Septation</keyword>
<reference key="1">
    <citation type="journal article" date="2008" name="PLoS ONE">
        <title>Genome biology of Actinobacillus pleuropneumoniae JL03, an isolate of serotype 3 prevalent in China.</title>
        <authorList>
            <person name="Xu Z."/>
            <person name="Zhou Y."/>
            <person name="Li L."/>
            <person name="Zhou R."/>
            <person name="Xiao S."/>
            <person name="Wan Y."/>
            <person name="Zhang S."/>
            <person name="Wang K."/>
            <person name="Li W."/>
            <person name="Li L."/>
            <person name="Jin H."/>
            <person name="Kang M."/>
            <person name="Dalai B."/>
            <person name="Li T."/>
            <person name="Liu L."/>
            <person name="Cheng Y."/>
            <person name="Zhang L."/>
            <person name="Xu T."/>
            <person name="Zheng H."/>
            <person name="Pu S."/>
            <person name="Wang B."/>
            <person name="Gu W."/>
            <person name="Zhang X.L."/>
            <person name="Zhu G.-F."/>
            <person name="Wang S."/>
            <person name="Zhao G.-P."/>
            <person name="Chen H."/>
        </authorList>
    </citation>
    <scope>NUCLEOTIDE SEQUENCE [LARGE SCALE GENOMIC DNA]</scope>
    <source>
        <strain>JL03</strain>
    </source>
</reference>
<comment type="function">
    <text evidence="1">Activator of cell division through the inhibition of FtsZ GTPase activity, therefore promoting FtsZ assembly into bundles of protofilaments necessary for the formation of the division Z ring. It is recruited early at mid-cell but it is not essential for cell division (By similarity).</text>
</comment>
<comment type="subunit">
    <text evidence="1">Homodimer. Interacts with FtsZ (By similarity).</text>
</comment>
<comment type="subcellular location">
    <subcellularLocation>
        <location evidence="1">Cytoplasm</location>
    </subcellularLocation>
    <text evidence="1">Localizes at mid-cell.</text>
</comment>
<comment type="similarity">
    <text evidence="3">Belongs to the ZapA family. Type 1 subfamily.</text>
</comment>
<evidence type="ECO:0000250" key="1"/>
<evidence type="ECO:0000255" key="2"/>
<evidence type="ECO:0000305" key="3"/>
<protein>
    <recommendedName>
        <fullName>Cell division protein ZapA</fullName>
    </recommendedName>
    <alternativeName>
        <fullName>Z ring-associated protein ZapA</fullName>
    </alternativeName>
</protein>
<accession>B0BS15</accession>
<name>ZAPA_ACTPJ</name>
<organism>
    <name type="scientific">Actinobacillus pleuropneumoniae serotype 3 (strain JL03)</name>
    <dbReference type="NCBI Taxonomy" id="434271"/>
    <lineage>
        <taxon>Bacteria</taxon>
        <taxon>Pseudomonadati</taxon>
        <taxon>Pseudomonadota</taxon>
        <taxon>Gammaproteobacteria</taxon>
        <taxon>Pasteurellales</taxon>
        <taxon>Pasteurellaceae</taxon>
        <taxon>Actinobacillus</taxon>
    </lineage>
</organism>
<proteinExistence type="inferred from homology"/>